<reference key="1">
    <citation type="journal article" date="1998" name="Nature">
        <title>The complete genome of the hyperthermophilic bacterium Aquifex aeolicus.</title>
        <authorList>
            <person name="Deckert G."/>
            <person name="Warren P.V."/>
            <person name="Gaasterland T."/>
            <person name="Young W.G."/>
            <person name="Lenox A.L."/>
            <person name="Graham D.E."/>
            <person name="Overbeek R."/>
            <person name="Snead M.A."/>
            <person name="Keller M."/>
            <person name="Aujay M."/>
            <person name="Huber R."/>
            <person name="Feldman R.A."/>
            <person name="Short J.M."/>
            <person name="Olsen G.J."/>
            <person name="Swanson R.V."/>
        </authorList>
    </citation>
    <scope>NUCLEOTIDE SEQUENCE [LARGE SCALE GENOMIC DNA]</scope>
    <source>
        <strain>VF5</strain>
    </source>
</reference>
<accession>O66625</accession>
<organism>
    <name type="scientific">Aquifex aeolicus (strain VF5)</name>
    <dbReference type="NCBI Taxonomy" id="224324"/>
    <lineage>
        <taxon>Bacteria</taxon>
        <taxon>Pseudomonadati</taxon>
        <taxon>Aquificota</taxon>
        <taxon>Aquificia</taxon>
        <taxon>Aquificales</taxon>
        <taxon>Aquificaceae</taxon>
        <taxon>Aquifex</taxon>
    </lineage>
</organism>
<dbReference type="EMBL" id="AE000657">
    <property type="protein sequence ID" value="AAC06590.1"/>
    <property type="status" value="ALT_INIT"/>
    <property type="molecule type" value="Genomic_DNA"/>
</dbReference>
<dbReference type="PIR" id="E70324">
    <property type="entry name" value="E70324"/>
</dbReference>
<dbReference type="RefSeq" id="NP_213185.1">
    <property type="nucleotide sequence ID" value="NC_000918.1"/>
</dbReference>
<dbReference type="RefSeq" id="WP_164930578.1">
    <property type="nucleotide sequence ID" value="NC_000918.1"/>
</dbReference>
<dbReference type="SMR" id="O66625"/>
<dbReference type="FunCoup" id="O66625">
    <property type="interactions" value="262"/>
</dbReference>
<dbReference type="STRING" id="224324.aq_268"/>
<dbReference type="EnsemblBacteria" id="AAC06590">
    <property type="protein sequence ID" value="AAC06590"/>
    <property type="gene ID" value="aq_268"/>
</dbReference>
<dbReference type="KEGG" id="aae:aq_268"/>
<dbReference type="eggNOG" id="COG1959">
    <property type="taxonomic scope" value="Bacteria"/>
</dbReference>
<dbReference type="HOGENOM" id="CLU_107144_1_4_0"/>
<dbReference type="InParanoid" id="O66625"/>
<dbReference type="OrthoDB" id="9808360at2"/>
<dbReference type="Proteomes" id="UP000000798">
    <property type="component" value="Chromosome"/>
</dbReference>
<dbReference type="GO" id="GO:0005829">
    <property type="term" value="C:cytosol"/>
    <property type="evidence" value="ECO:0000318"/>
    <property type="project" value="GO_Central"/>
</dbReference>
<dbReference type="GO" id="GO:0003677">
    <property type="term" value="F:DNA binding"/>
    <property type="evidence" value="ECO:0007669"/>
    <property type="project" value="UniProtKB-KW"/>
</dbReference>
<dbReference type="GO" id="GO:0003700">
    <property type="term" value="F:DNA-binding transcription factor activity"/>
    <property type="evidence" value="ECO:0000318"/>
    <property type="project" value="GO_Central"/>
</dbReference>
<dbReference type="GO" id="GO:0006355">
    <property type="term" value="P:regulation of DNA-templated transcription"/>
    <property type="evidence" value="ECO:0000318"/>
    <property type="project" value="GO_Central"/>
</dbReference>
<dbReference type="Gene3D" id="1.10.10.10">
    <property type="entry name" value="Winged helix-like DNA-binding domain superfamily/Winged helix DNA-binding domain"/>
    <property type="match status" value="1"/>
</dbReference>
<dbReference type="InterPro" id="IPR030489">
    <property type="entry name" value="TR_Rrf2-type_CS"/>
</dbReference>
<dbReference type="InterPro" id="IPR000944">
    <property type="entry name" value="Tscrpt_reg_Rrf2"/>
</dbReference>
<dbReference type="InterPro" id="IPR036388">
    <property type="entry name" value="WH-like_DNA-bd_sf"/>
</dbReference>
<dbReference type="InterPro" id="IPR036390">
    <property type="entry name" value="WH_DNA-bd_sf"/>
</dbReference>
<dbReference type="NCBIfam" id="TIGR00738">
    <property type="entry name" value="rrf2_super"/>
    <property type="match status" value="1"/>
</dbReference>
<dbReference type="PANTHER" id="PTHR33221:SF14">
    <property type="entry name" value="HTH-TYPE TRANSCRIPTIONAL REGULATOR AQ_268-RELATED"/>
    <property type="match status" value="1"/>
</dbReference>
<dbReference type="PANTHER" id="PTHR33221">
    <property type="entry name" value="WINGED HELIX-TURN-HELIX TRANSCRIPTIONAL REGULATOR, RRF2 FAMILY"/>
    <property type="match status" value="1"/>
</dbReference>
<dbReference type="Pfam" id="PF02082">
    <property type="entry name" value="Rrf2"/>
    <property type="match status" value="1"/>
</dbReference>
<dbReference type="SUPFAM" id="SSF46785">
    <property type="entry name" value="Winged helix' DNA-binding domain"/>
    <property type="match status" value="1"/>
</dbReference>
<dbReference type="PROSITE" id="PS01332">
    <property type="entry name" value="HTH_RRF2_1"/>
    <property type="match status" value="1"/>
</dbReference>
<dbReference type="PROSITE" id="PS51197">
    <property type="entry name" value="HTH_RRF2_2"/>
    <property type="match status" value="1"/>
</dbReference>
<evidence type="ECO:0000255" key="1">
    <source>
        <dbReference type="PROSITE-ProRule" id="PRU00540"/>
    </source>
</evidence>
<evidence type="ECO:0000305" key="2"/>
<comment type="sequence caution" evidence="2">
    <conflict type="erroneous initiation">
        <sequence resource="EMBL-CDS" id="AAC06590"/>
    </conflict>
</comment>
<feature type="chain" id="PRO_0000109565" description="Putative HTH-type transcriptional regulator aq_268">
    <location>
        <begin position="1"/>
        <end position="144"/>
    </location>
</feature>
<feature type="domain" description="HTH rrf2-type" evidence="1">
    <location>
        <begin position="2"/>
        <end position="133"/>
    </location>
</feature>
<name>Y268_AQUAE</name>
<gene>
    <name type="ordered locus">aq_268</name>
</gene>
<sequence length="144" mass="16719">MIFSDTVRYALIALAYLALNRDRLVKVEEIAKVHKIPRPFLAKVMHELSKRGVVYSVKGPRGGFSLAKEPDKITIWDIIELFGDAYKYEMCLLMPHKCSEFADNPCIVHHKWEELKSQIQDFFKGTTIKDLINIEEKHLFPVSR</sequence>
<protein>
    <recommendedName>
        <fullName>Putative HTH-type transcriptional regulator aq_268</fullName>
    </recommendedName>
</protein>
<proteinExistence type="predicted"/>
<keyword id="KW-0238">DNA-binding</keyword>
<keyword id="KW-1185">Reference proteome</keyword>